<sequence length="119" mass="13010">MAGTGKTVTRVDLCEAVYQKVGLSRTESSAFVELVLKEITDCLERGETVKLSSFGSFMVRKKGQRIGRNPKTGTEVPISPRRVMVFKPSAILKQRINGQQANGKMNGESAPSEFSAETE</sequence>
<accession>A4YW83</accession>
<organism>
    <name type="scientific">Bradyrhizobium sp. (strain ORS 278)</name>
    <dbReference type="NCBI Taxonomy" id="114615"/>
    <lineage>
        <taxon>Bacteria</taxon>
        <taxon>Pseudomonadati</taxon>
        <taxon>Pseudomonadota</taxon>
        <taxon>Alphaproteobacteria</taxon>
        <taxon>Hyphomicrobiales</taxon>
        <taxon>Nitrobacteraceae</taxon>
        <taxon>Bradyrhizobium</taxon>
    </lineage>
</organism>
<protein>
    <recommendedName>
        <fullName evidence="1">Integration host factor subunit alpha</fullName>
        <shortName evidence="1">IHF-alpha</shortName>
    </recommendedName>
</protein>
<proteinExistence type="inferred from homology"/>
<dbReference type="EMBL" id="CU234118">
    <property type="protein sequence ID" value="CAL78159.1"/>
    <property type="molecule type" value="Genomic_DNA"/>
</dbReference>
<dbReference type="RefSeq" id="WP_011927274.1">
    <property type="nucleotide sequence ID" value="NC_009445.1"/>
</dbReference>
<dbReference type="SMR" id="A4YW83"/>
<dbReference type="STRING" id="114615.BRADO4416"/>
<dbReference type="KEGG" id="bra:BRADO4416"/>
<dbReference type="eggNOG" id="COG0776">
    <property type="taxonomic scope" value="Bacteria"/>
</dbReference>
<dbReference type="HOGENOM" id="CLU_105066_1_1_5"/>
<dbReference type="OrthoDB" id="9797747at2"/>
<dbReference type="Proteomes" id="UP000001994">
    <property type="component" value="Chromosome"/>
</dbReference>
<dbReference type="GO" id="GO:0005829">
    <property type="term" value="C:cytosol"/>
    <property type="evidence" value="ECO:0007669"/>
    <property type="project" value="TreeGrafter"/>
</dbReference>
<dbReference type="GO" id="GO:0003677">
    <property type="term" value="F:DNA binding"/>
    <property type="evidence" value="ECO:0007669"/>
    <property type="project" value="UniProtKB-UniRule"/>
</dbReference>
<dbReference type="GO" id="GO:0030527">
    <property type="term" value="F:structural constituent of chromatin"/>
    <property type="evidence" value="ECO:0007669"/>
    <property type="project" value="InterPro"/>
</dbReference>
<dbReference type="GO" id="GO:0006310">
    <property type="term" value="P:DNA recombination"/>
    <property type="evidence" value="ECO:0007669"/>
    <property type="project" value="UniProtKB-UniRule"/>
</dbReference>
<dbReference type="GO" id="GO:0009893">
    <property type="term" value="P:positive regulation of metabolic process"/>
    <property type="evidence" value="ECO:0007669"/>
    <property type="project" value="UniProtKB-ARBA"/>
</dbReference>
<dbReference type="GO" id="GO:0006355">
    <property type="term" value="P:regulation of DNA-templated transcription"/>
    <property type="evidence" value="ECO:0007669"/>
    <property type="project" value="UniProtKB-UniRule"/>
</dbReference>
<dbReference type="GO" id="GO:0006417">
    <property type="term" value="P:regulation of translation"/>
    <property type="evidence" value="ECO:0007669"/>
    <property type="project" value="UniProtKB-UniRule"/>
</dbReference>
<dbReference type="CDD" id="cd13835">
    <property type="entry name" value="IHF_A"/>
    <property type="match status" value="1"/>
</dbReference>
<dbReference type="FunFam" id="4.10.520.10:FF:000010">
    <property type="entry name" value="Integration host factor subunit alpha"/>
    <property type="match status" value="1"/>
</dbReference>
<dbReference type="Gene3D" id="4.10.520.10">
    <property type="entry name" value="IHF-like DNA-binding proteins"/>
    <property type="match status" value="1"/>
</dbReference>
<dbReference type="HAMAP" id="MF_00380">
    <property type="entry name" value="IHF_alpha"/>
    <property type="match status" value="1"/>
</dbReference>
<dbReference type="InterPro" id="IPR000119">
    <property type="entry name" value="Hist_DNA-bd"/>
</dbReference>
<dbReference type="InterPro" id="IPR020816">
    <property type="entry name" value="Histone-like_DNA-bd_CS"/>
</dbReference>
<dbReference type="InterPro" id="IPR010992">
    <property type="entry name" value="IHF-like_DNA-bd_dom_sf"/>
</dbReference>
<dbReference type="InterPro" id="IPR005684">
    <property type="entry name" value="IHF_alpha"/>
</dbReference>
<dbReference type="NCBIfam" id="TIGR00987">
    <property type="entry name" value="himA"/>
    <property type="match status" value="1"/>
</dbReference>
<dbReference type="NCBIfam" id="NF001401">
    <property type="entry name" value="PRK00285.1"/>
    <property type="match status" value="1"/>
</dbReference>
<dbReference type="PANTHER" id="PTHR33175">
    <property type="entry name" value="DNA-BINDING PROTEIN HU"/>
    <property type="match status" value="1"/>
</dbReference>
<dbReference type="PANTHER" id="PTHR33175:SF2">
    <property type="entry name" value="INTEGRATION HOST FACTOR SUBUNIT ALPHA"/>
    <property type="match status" value="1"/>
</dbReference>
<dbReference type="Pfam" id="PF00216">
    <property type="entry name" value="Bac_DNA_binding"/>
    <property type="match status" value="1"/>
</dbReference>
<dbReference type="PRINTS" id="PR01727">
    <property type="entry name" value="DNABINDINGHU"/>
</dbReference>
<dbReference type="SMART" id="SM00411">
    <property type="entry name" value="BHL"/>
    <property type="match status" value="1"/>
</dbReference>
<dbReference type="SUPFAM" id="SSF47729">
    <property type="entry name" value="IHF-like DNA-binding proteins"/>
    <property type="match status" value="1"/>
</dbReference>
<dbReference type="PROSITE" id="PS00045">
    <property type="entry name" value="HISTONE_LIKE"/>
    <property type="match status" value="1"/>
</dbReference>
<evidence type="ECO:0000255" key="1">
    <source>
        <dbReference type="HAMAP-Rule" id="MF_00380"/>
    </source>
</evidence>
<evidence type="ECO:0000256" key="2">
    <source>
        <dbReference type="SAM" id="MobiDB-lite"/>
    </source>
</evidence>
<name>IHFA_BRASO</name>
<feature type="chain" id="PRO_1000060537" description="Integration host factor subunit alpha">
    <location>
        <begin position="1"/>
        <end position="119"/>
    </location>
</feature>
<feature type="region of interest" description="Disordered" evidence="2">
    <location>
        <begin position="96"/>
        <end position="119"/>
    </location>
</feature>
<gene>
    <name evidence="1" type="primary">ihfA</name>
    <name evidence="1" type="synonym">himA</name>
    <name type="ordered locus">BRADO4416</name>
</gene>
<reference key="1">
    <citation type="journal article" date="2007" name="Science">
        <title>Legumes symbioses: absence of nod genes in photosynthetic bradyrhizobia.</title>
        <authorList>
            <person name="Giraud E."/>
            <person name="Moulin L."/>
            <person name="Vallenet D."/>
            <person name="Barbe V."/>
            <person name="Cytryn E."/>
            <person name="Avarre J.-C."/>
            <person name="Jaubert M."/>
            <person name="Simon D."/>
            <person name="Cartieaux F."/>
            <person name="Prin Y."/>
            <person name="Bena G."/>
            <person name="Hannibal L."/>
            <person name="Fardoux J."/>
            <person name="Kojadinovic M."/>
            <person name="Vuillet L."/>
            <person name="Lajus A."/>
            <person name="Cruveiller S."/>
            <person name="Rouy Z."/>
            <person name="Mangenot S."/>
            <person name="Segurens B."/>
            <person name="Dossat C."/>
            <person name="Franck W.L."/>
            <person name="Chang W.-S."/>
            <person name="Saunders E."/>
            <person name="Bruce D."/>
            <person name="Richardson P."/>
            <person name="Normand P."/>
            <person name="Dreyfus B."/>
            <person name="Pignol D."/>
            <person name="Stacey G."/>
            <person name="Emerich D."/>
            <person name="Vermeglio A."/>
            <person name="Medigue C."/>
            <person name="Sadowsky M."/>
        </authorList>
    </citation>
    <scope>NUCLEOTIDE SEQUENCE [LARGE SCALE GENOMIC DNA]</scope>
    <source>
        <strain>ORS 278</strain>
    </source>
</reference>
<comment type="function">
    <text evidence="1">This protein is one of the two subunits of integration host factor, a specific DNA-binding protein that functions in genetic recombination as well as in transcriptional and translational control.</text>
</comment>
<comment type="subunit">
    <text evidence="1">Heterodimer of an alpha and a beta chain.</text>
</comment>
<comment type="similarity">
    <text evidence="1">Belongs to the bacterial histone-like protein family.</text>
</comment>
<keyword id="KW-0233">DNA recombination</keyword>
<keyword id="KW-0238">DNA-binding</keyword>
<keyword id="KW-1185">Reference proteome</keyword>
<keyword id="KW-0804">Transcription</keyword>
<keyword id="KW-0805">Transcription regulation</keyword>
<keyword id="KW-0810">Translation regulation</keyword>